<reference key="1">
    <citation type="submission" date="2009-07" db="EMBL/GenBank/DDBJ databases">
        <title>Complete sequence of Geobacter sp. M21.</title>
        <authorList>
            <consortium name="US DOE Joint Genome Institute"/>
            <person name="Lucas S."/>
            <person name="Copeland A."/>
            <person name="Lapidus A."/>
            <person name="Glavina del Rio T."/>
            <person name="Dalin E."/>
            <person name="Tice H."/>
            <person name="Bruce D."/>
            <person name="Goodwin L."/>
            <person name="Pitluck S."/>
            <person name="Saunders E."/>
            <person name="Brettin T."/>
            <person name="Detter J.C."/>
            <person name="Han C."/>
            <person name="Larimer F."/>
            <person name="Land M."/>
            <person name="Hauser L."/>
            <person name="Kyrpides N."/>
            <person name="Ovchinnikova G."/>
            <person name="Lovley D."/>
        </authorList>
    </citation>
    <scope>NUCLEOTIDE SEQUENCE [LARGE SCALE GENOMIC DNA]</scope>
    <source>
        <strain>M21</strain>
    </source>
</reference>
<dbReference type="EC" id="1.1.1.267" evidence="1"/>
<dbReference type="EMBL" id="CP001661">
    <property type="protein sequence ID" value="ACT17547.1"/>
    <property type="molecule type" value="Genomic_DNA"/>
</dbReference>
<dbReference type="SMR" id="C6E518"/>
<dbReference type="STRING" id="443144.GM21_1491"/>
<dbReference type="KEGG" id="gem:GM21_1491"/>
<dbReference type="eggNOG" id="COG0743">
    <property type="taxonomic scope" value="Bacteria"/>
</dbReference>
<dbReference type="HOGENOM" id="CLU_035714_4_0_7"/>
<dbReference type="OrthoDB" id="9806546at2"/>
<dbReference type="UniPathway" id="UPA00056">
    <property type="reaction ID" value="UER00092"/>
</dbReference>
<dbReference type="GO" id="GO:0030604">
    <property type="term" value="F:1-deoxy-D-xylulose-5-phosphate reductoisomerase activity"/>
    <property type="evidence" value="ECO:0007669"/>
    <property type="project" value="UniProtKB-UniRule"/>
</dbReference>
<dbReference type="GO" id="GO:0030145">
    <property type="term" value="F:manganese ion binding"/>
    <property type="evidence" value="ECO:0007669"/>
    <property type="project" value="TreeGrafter"/>
</dbReference>
<dbReference type="GO" id="GO:0070402">
    <property type="term" value="F:NADPH binding"/>
    <property type="evidence" value="ECO:0007669"/>
    <property type="project" value="InterPro"/>
</dbReference>
<dbReference type="GO" id="GO:0051484">
    <property type="term" value="P:isopentenyl diphosphate biosynthetic process, methylerythritol 4-phosphate pathway involved in terpenoid biosynthetic process"/>
    <property type="evidence" value="ECO:0007669"/>
    <property type="project" value="TreeGrafter"/>
</dbReference>
<dbReference type="FunFam" id="3.40.50.720:FF:000045">
    <property type="entry name" value="1-deoxy-D-xylulose 5-phosphate reductoisomerase"/>
    <property type="match status" value="1"/>
</dbReference>
<dbReference type="Gene3D" id="1.10.1740.10">
    <property type="match status" value="1"/>
</dbReference>
<dbReference type="Gene3D" id="3.40.50.720">
    <property type="entry name" value="NAD(P)-binding Rossmann-like Domain"/>
    <property type="match status" value="1"/>
</dbReference>
<dbReference type="HAMAP" id="MF_00183">
    <property type="entry name" value="DXP_reductoisom"/>
    <property type="match status" value="1"/>
</dbReference>
<dbReference type="InterPro" id="IPR003821">
    <property type="entry name" value="DXP_reductoisomerase"/>
</dbReference>
<dbReference type="InterPro" id="IPR013644">
    <property type="entry name" value="DXP_reductoisomerase_C"/>
</dbReference>
<dbReference type="InterPro" id="IPR013512">
    <property type="entry name" value="DXP_reductoisomerase_N"/>
</dbReference>
<dbReference type="InterPro" id="IPR026877">
    <property type="entry name" value="DXPR_C"/>
</dbReference>
<dbReference type="InterPro" id="IPR036169">
    <property type="entry name" value="DXPR_C_sf"/>
</dbReference>
<dbReference type="InterPro" id="IPR036291">
    <property type="entry name" value="NAD(P)-bd_dom_sf"/>
</dbReference>
<dbReference type="NCBIfam" id="TIGR00243">
    <property type="entry name" value="Dxr"/>
    <property type="match status" value="1"/>
</dbReference>
<dbReference type="NCBIfam" id="NF009114">
    <property type="entry name" value="PRK12464.1"/>
    <property type="match status" value="1"/>
</dbReference>
<dbReference type="PANTHER" id="PTHR30525">
    <property type="entry name" value="1-DEOXY-D-XYLULOSE 5-PHOSPHATE REDUCTOISOMERASE"/>
    <property type="match status" value="1"/>
</dbReference>
<dbReference type="PANTHER" id="PTHR30525:SF0">
    <property type="entry name" value="1-DEOXY-D-XYLULOSE 5-PHOSPHATE REDUCTOISOMERASE, CHLOROPLASTIC"/>
    <property type="match status" value="1"/>
</dbReference>
<dbReference type="Pfam" id="PF08436">
    <property type="entry name" value="DXP_redisom_C"/>
    <property type="match status" value="1"/>
</dbReference>
<dbReference type="Pfam" id="PF02670">
    <property type="entry name" value="DXP_reductoisom"/>
    <property type="match status" value="1"/>
</dbReference>
<dbReference type="Pfam" id="PF13288">
    <property type="entry name" value="DXPR_C"/>
    <property type="match status" value="1"/>
</dbReference>
<dbReference type="PIRSF" id="PIRSF006205">
    <property type="entry name" value="Dxp_reductismrs"/>
    <property type="match status" value="1"/>
</dbReference>
<dbReference type="SUPFAM" id="SSF69055">
    <property type="entry name" value="1-deoxy-D-xylulose-5-phosphate reductoisomerase, C-terminal domain"/>
    <property type="match status" value="1"/>
</dbReference>
<dbReference type="SUPFAM" id="SSF55347">
    <property type="entry name" value="Glyceraldehyde-3-phosphate dehydrogenase-like, C-terminal domain"/>
    <property type="match status" value="1"/>
</dbReference>
<dbReference type="SUPFAM" id="SSF51735">
    <property type="entry name" value="NAD(P)-binding Rossmann-fold domains"/>
    <property type="match status" value="1"/>
</dbReference>
<keyword id="KW-0414">Isoprene biosynthesis</keyword>
<keyword id="KW-0464">Manganese</keyword>
<keyword id="KW-0479">Metal-binding</keyword>
<keyword id="KW-0521">NADP</keyword>
<keyword id="KW-0560">Oxidoreductase</keyword>
<sequence length="385" mass="41105">MKNLTILGSTGSIGVSTLDVVAAYPDMFRVVALTAGNNLELLKTQIETFRPELVSVLTAEKAQALSRSLTGKKPEIMHGVEGMIAAATASETTMVVAAIVGAAGLVPTTAAIMAGKDVALANKETLVTAGHLVMQMVREKKVKLYPVDSEHCAVFQSMAGHRSQDIARVILTASGGPFLNWGREQLQGATVADALNHPNWSMGRKITVDSATMMNKGLEVIEARWLFDIPVQRIAVNIHPQSIIHSMVEYVDGSVMAQLGTPDMKGPIAYALTYPGRVPSGVKALDLTALSGLTFFKPDTDRFPALKLAYRAADAGESMPAVMNAANEIAVEAFLAGRIGFMAIAEAIEKVMDLHEPHALASIEEVLETDRWGRRTAKEVLGVGC</sequence>
<protein>
    <recommendedName>
        <fullName evidence="1">1-deoxy-D-xylulose 5-phosphate reductoisomerase</fullName>
        <shortName evidence="1">DXP reductoisomerase</shortName>
        <ecNumber evidence="1">1.1.1.267</ecNumber>
    </recommendedName>
    <alternativeName>
        <fullName evidence="1">1-deoxyxylulose-5-phosphate reductoisomerase</fullName>
    </alternativeName>
    <alternativeName>
        <fullName evidence="1">2-C-methyl-D-erythritol 4-phosphate synthase</fullName>
    </alternativeName>
</protein>
<proteinExistence type="inferred from homology"/>
<feature type="chain" id="PRO_1000203888" description="1-deoxy-D-xylulose 5-phosphate reductoisomerase">
    <location>
        <begin position="1"/>
        <end position="385"/>
    </location>
</feature>
<feature type="binding site" evidence="1">
    <location>
        <position position="10"/>
    </location>
    <ligand>
        <name>NADPH</name>
        <dbReference type="ChEBI" id="CHEBI:57783"/>
    </ligand>
</feature>
<feature type="binding site" evidence="1">
    <location>
        <position position="11"/>
    </location>
    <ligand>
        <name>NADPH</name>
        <dbReference type="ChEBI" id="CHEBI:57783"/>
    </ligand>
</feature>
<feature type="binding site" evidence="1">
    <location>
        <position position="12"/>
    </location>
    <ligand>
        <name>NADPH</name>
        <dbReference type="ChEBI" id="CHEBI:57783"/>
    </ligand>
</feature>
<feature type="binding site" evidence="1">
    <location>
        <position position="13"/>
    </location>
    <ligand>
        <name>NADPH</name>
        <dbReference type="ChEBI" id="CHEBI:57783"/>
    </ligand>
</feature>
<feature type="binding site" evidence="1">
    <location>
        <position position="36"/>
    </location>
    <ligand>
        <name>NADPH</name>
        <dbReference type="ChEBI" id="CHEBI:57783"/>
    </ligand>
</feature>
<feature type="binding site" evidence="1">
    <location>
        <position position="38"/>
    </location>
    <ligand>
        <name>NADPH</name>
        <dbReference type="ChEBI" id="CHEBI:57783"/>
    </ligand>
</feature>
<feature type="binding site" evidence="1">
    <location>
        <position position="122"/>
    </location>
    <ligand>
        <name>NADPH</name>
        <dbReference type="ChEBI" id="CHEBI:57783"/>
    </ligand>
</feature>
<feature type="binding site" evidence="1">
    <location>
        <position position="123"/>
    </location>
    <ligand>
        <name>1-deoxy-D-xylulose 5-phosphate</name>
        <dbReference type="ChEBI" id="CHEBI:57792"/>
    </ligand>
</feature>
<feature type="binding site" evidence="1">
    <location>
        <position position="124"/>
    </location>
    <ligand>
        <name>NADPH</name>
        <dbReference type="ChEBI" id="CHEBI:57783"/>
    </ligand>
</feature>
<feature type="binding site" evidence="1">
    <location>
        <position position="148"/>
    </location>
    <ligand>
        <name>Mn(2+)</name>
        <dbReference type="ChEBI" id="CHEBI:29035"/>
    </ligand>
</feature>
<feature type="binding site" evidence="1">
    <location>
        <position position="149"/>
    </location>
    <ligand>
        <name>1-deoxy-D-xylulose 5-phosphate</name>
        <dbReference type="ChEBI" id="CHEBI:57792"/>
    </ligand>
</feature>
<feature type="binding site" evidence="1">
    <location>
        <position position="150"/>
    </location>
    <ligand>
        <name>1-deoxy-D-xylulose 5-phosphate</name>
        <dbReference type="ChEBI" id="CHEBI:57792"/>
    </ligand>
</feature>
<feature type="binding site" evidence="1">
    <location>
        <position position="150"/>
    </location>
    <ligand>
        <name>Mn(2+)</name>
        <dbReference type="ChEBI" id="CHEBI:29035"/>
    </ligand>
</feature>
<feature type="binding site" evidence="1">
    <location>
        <position position="174"/>
    </location>
    <ligand>
        <name>1-deoxy-D-xylulose 5-phosphate</name>
        <dbReference type="ChEBI" id="CHEBI:57792"/>
    </ligand>
</feature>
<feature type="binding site" evidence="1">
    <location>
        <position position="197"/>
    </location>
    <ligand>
        <name>1-deoxy-D-xylulose 5-phosphate</name>
        <dbReference type="ChEBI" id="CHEBI:57792"/>
    </ligand>
</feature>
<feature type="binding site" evidence="1">
    <location>
        <position position="203"/>
    </location>
    <ligand>
        <name>NADPH</name>
        <dbReference type="ChEBI" id="CHEBI:57783"/>
    </ligand>
</feature>
<feature type="binding site" evidence="1">
    <location>
        <position position="210"/>
    </location>
    <ligand>
        <name>1-deoxy-D-xylulose 5-phosphate</name>
        <dbReference type="ChEBI" id="CHEBI:57792"/>
    </ligand>
</feature>
<feature type="binding site" evidence="1">
    <location>
        <position position="215"/>
    </location>
    <ligand>
        <name>1-deoxy-D-xylulose 5-phosphate</name>
        <dbReference type="ChEBI" id="CHEBI:57792"/>
    </ligand>
</feature>
<feature type="binding site" evidence="1">
    <location>
        <position position="216"/>
    </location>
    <ligand>
        <name>1-deoxy-D-xylulose 5-phosphate</name>
        <dbReference type="ChEBI" id="CHEBI:57792"/>
    </ligand>
</feature>
<feature type="binding site" evidence="1">
    <location>
        <position position="219"/>
    </location>
    <ligand>
        <name>1-deoxy-D-xylulose 5-phosphate</name>
        <dbReference type="ChEBI" id="CHEBI:57792"/>
    </ligand>
</feature>
<feature type="binding site" evidence="1">
    <location>
        <position position="219"/>
    </location>
    <ligand>
        <name>Mn(2+)</name>
        <dbReference type="ChEBI" id="CHEBI:29035"/>
    </ligand>
</feature>
<evidence type="ECO:0000255" key="1">
    <source>
        <dbReference type="HAMAP-Rule" id="MF_00183"/>
    </source>
</evidence>
<comment type="function">
    <text evidence="1">Catalyzes the NADPH-dependent rearrangement and reduction of 1-deoxy-D-xylulose-5-phosphate (DXP) to 2-C-methyl-D-erythritol 4-phosphate (MEP).</text>
</comment>
<comment type="catalytic activity">
    <reaction evidence="1">
        <text>2-C-methyl-D-erythritol 4-phosphate + NADP(+) = 1-deoxy-D-xylulose 5-phosphate + NADPH + H(+)</text>
        <dbReference type="Rhea" id="RHEA:13717"/>
        <dbReference type="ChEBI" id="CHEBI:15378"/>
        <dbReference type="ChEBI" id="CHEBI:57783"/>
        <dbReference type="ChEBI" id="CHEBI:57792"/>
        <dbReference type="ChEBI" id="CHEBI:58262"/>
        <dbReference type="ChEBI" id="CHEBI:58349"/>
        <dbReference type="EC" id="1.1.1.267"/>
    </reaction>
    <physiologicalReaction direction="right-to-left" evidence="1">
        <dbReference type="Rhea" id="RHEA:13719"/>
    </physiologicalReaction>
</comment>
<comment type="cofactor">
    <cofactor evidence="1">
        <name>Mg(2+)</name>
        <dbReference type="ChEBI" id="CHEBI:18420"/>
    </cofactor>
    <cofactor evidence="1">
        <name>Mn(2+)</name>
        <dbReference type="ChEBI" id="CHEBI:29035"/>
    </cofactor>
</comment>
<comment type="pathway">
    <text evidence="1">Isoprenoid biosynthesis; isopentenyl diphosphate biosynthesis via DXP pathway; isopentenyl diphosphate from 1-deoxy-D-xylulose 5-phosphate: step 1/6.</text>
</comment>
<comment type="similarity">
    <text evidence="1">Belongs to the DXR family.</text>
</comment>
<accession>C6E518</accession>
<gene>
    <name evidence="1" type="primary">dxr</name>
    <name type="ordered locus">GM21_1491</name>
</gene>
<organism>
    <name type="scientific">Geobacter sp. (strain M21)</name>
    <dbReference type="NCBI Taxonomy" id="443144"/>
    <lineage>
        <taxon>Bacteria</taxon>
        <taxon>Pseudomonadati</taxon>
        <taxon>Thermodesulfobacteriota</taxon>
        <taxon>Desulfuromonadia</taxon>
        <taxon>Geobacterales</taxon>
        <taxon>Geobacteraceae</taxon>
        <taxon>Geobacter</taxon>
    </lineage>
</organism>
<name>DXR_GEOSM</name>